<keyword id="KW-1185">Reference proteome</keyword>
<feature type="chain" id="PRO_0000071604" description="Surface composition regulator">
    <location>
        <begin position="1"/>
        <end position="66"/>
    </location>
</feature>
<evidence type="ECO:0000255" key="1">
    <source>
        <dbReference type="HAMAP-Rule" id="MF_00525"/>
    </source>
</evidence>
<sequence length="66" mass="7906">MEHSLNSLNNFDFLARSFARMHAEGRPVDILAVTGNMDEEHRTWFCARYAWYCQQMMQARELELEH</sequence>
<proteinExistence type="inferred from homology"/>
<reference key="1">
    <citation type="journal article" date="2002" name="Nucleic Acids Res.">
        <title>Genome sequence of Shigella flexneri 2a: insights into pathogenicity through comparison with genomes of Escherichia coli K12 and O157.</title>
        <authorList>
            <person name="Jin Q."/>
            <person name="Yuan Z."/>
            <person name="Xu J."/>
            <person name="Wang Y."/>
            <person name="Shen Y."/>
            <person name="Lu W."/>
            <person name="Wang J."/>
            <person name="Liu H."/>
            <person name="Yang J."/>
            <person name="Yang F."/>
            <person name="Zhang X."/>
            <person name="Zhang J."/>
            <person name="Yang G."/>
            <person name="Wu H."/>
            <person name="Qu D."/>
            <person name="Dong J."/>
            <person name="Sun L."/>
            <person name="Xue Y."/>
            <person name="Zhao A."/>
            <person name="Gao Y."/>
            <person name="Zhu J."/>
            <person name="Kan B."/>
            <person name="Ding K."/>
            <person name="Chen S."/>
            <person name="Cheng H."/>
            <person name="Yao Z."/>
            <person name="He B."/>
            <person name="Chen R."/>
            <person name="Ma D."/>
            <person name="Qiang B."/>
            <person name="Wen Y."/>
            <person name="Hou Y."/>
            <person name="Yu J."/>
        </authorList>
    </citation>
    <scope>NUCLEOTIDE SEQUENCE [LARGE SCALE GENOMIC DNA]</scope>
    <source>
        <strain>301 / Serotype 2a</strain>
    </source>
</reference>
<reference key="2">
    <citation type="journal article" date="2003" name="Infect. Immun.">
        <title>Complete genome sequence and comparative genomics of Shigella flexneri serotype 2a strain 2457T.</title>
        <authorList>
            <person name="Wei J."/>
            <person name="Goldberg M.B."/>
            <person name="Burland V."/>
            <person name="Venkatesan M.M."/>
            <person name="Deng W."/>
            <person name="Fournier G."/>
            <person name="Mayhew G.F."/>
            <person name="Plunkett G. III"/>
            <person name="Rose D.J."/>
            <person name="Darling A."/>
            <person name="Mau B."/>
            <person name="Perna N.T."/>
            <person name="Payne S.M."/>
            <person name="Runyen-Janecky L.J."/>
            <person name="Zhou S."/>
            <person name="Schwartz D.C."/>
            <person name="Blattner F.R."/>
        </authorList>
    </citation>
    <scope>NUCLEOTIDE SEQUENCE [LARGE SCALE GENOMIC DNA]</scope>
    <source>
        <strain>ATCC 700930 / 2457T / Serotype 2a</strain>
    </source>
</reference>
<dbReference type="EMBL" id="AE005674">
    <property type="protein sequence ID" value="AAN44566.2"/>
    <property type="molecule type" value="Genomic_DNA"/>
</dbReference>
<dbReference type="EMBL" id="AE014073">
    <property type="protein sequence ID" value="AAP18379.1"/>
    <property type="molecule type" value="Genomic_DNA"/>
</dbReference>
<dbReference type="RefSeq" id="NP_708859.2">
    <property type="nucleotide sequence ID" value="NC_004337.2"/>
</dbReference>
<dbReference type="RefSeq" id="WP_005051912.1">
    <property type="nucleotide sequence ID" value="NZ_WPGV01000243.1"/>
</dbReference>
<dbReference type="SMR" id="Q7UBJ0"/>
<dbReference type="STRING" id="198214.SF3089"/>
<dbReference type="PaxDb" id="198214-SF3089"/>
<dbReference type="GeneID" id="1026658"/>
<dbReference type="KEGG" id="sfl:SF3089"/>
<dbReference type="KEGG" id="sfx:S3294"/>
<dbReference type="PATRIC" id="fig|198214.7.peg.3666"/>
<dbReference type="HOGENOM" id="CLU_185971_0_0_6"/>
<dbReference type="Proteomes" id="UP000001006">
    <property type="component" value="Chromosome"/>
</dbReference>
<dbReference type="Proteomes" id="UP000002673">
    <property type="component" value="Chromosome"/>
</dbReference>
<dbReference type="GO" id="GO:1902201">
    <property type="term" value="P:negative regulation of bacterial-type flagellum-dependent cell motility"/>
    <property type="evidence" value="ECO:0007669"/>
    <property type="project" value="UniProtKB-UniRule"/>
</dbReference>
<dbReference type="GO" id="GO:1900191">
    <property type="term" value="P:negative regulation of single-species biofilm formation"/>
    <property type="evidence" value="ECO:0007669"/>
    <property type="project" value="UniProtKB-UniRule"/>
</dbReference>
<dbReference type="FunFam" id="1.20.970.20:FF:000001">
    <property type="entry name" value="Surface composition regulator"/>
    <property type="match status" value="1"/>
</dbReference>
<dbReference type="Gene3D" id="1.20.970.20">
    <property type="entry name" value="Glycogen synthesis protein GlgS"/>
    <property type="match status" value="1"/>
</dbReference>
<dbReference type="HAMAP" id="MF_00525">
    <property type="entry name" value="GlgS"/>
    <property type="match status" value="1"/>
</dbReference>
<dbReference type="InterPro" id="IPR015065">
    <property type="entry name" value="GlgS"/>
</dbReference>
<dbReference type="InterPro" id="IPR036295">
    <property type="entry name" value="GlgS_sf"/>
</dbReference>
<dbReference type="NCBIfam" id="NF002793">
    <property type="entry name" value="PRK02922.1"/>
    <property type="match status" value="1"/>
</dbReference>
<dbReference type="Pfam" id="PF08971">
    <property type="entry name" value="GlgS"/>
    <property type="match status" value="1"/>
</dbReference>
<dbReference type="SUPFAM" id="SSF109747">
    <property type="entry name" value="Glycogen synthesis protein GlgS"/>
    <property type="match status" value="1"/>
</dbReference>
<protein>
    <recommendedName>
        <fullName evidence="1">Surface composition regulator</fullName>
    </recommendedName>
</protein>
<name>GLGS_SHIFL</name>
<organism>
    <name type="scientific">Shigella flexneri</name>
    <dbReference type="NCBI Taxonomy" id="623"/>
    <lineage>
        <taxon>Bacteria</taxon>
        <taxon>Pseudomonadati</taxon>
        <taxon>Pseudomonadota</taxon>
        <taxon>Gammaproteobacteria</taxon>
        <taxon>Enterobacterales</taxon>
        <taxon>Enterobacteriaceae</taxon>
        <taxon>Shigella</taxon>
    </lineage>
</organism>
<gene>
    <name evidence="1" type="primary">glgS</name>
    <name type="ordered locus">SF3089</name>
    <name type="ordered locus">S3294</name>
</gene>
<comment type="function">
    <text evidence="1">Major determinant of cell surface composition. Negatively regulates motility, adhesion and synthesis of biofilm exopolysaccharides.</text>
</comment>
<comment type="similarity">
    <text evidence="1">Belongs to the GlgS family.</text>
</comment>
<accession>Q7UBJ0</accession>
<accession>Q83Q49</accession>